<keyword id="KW-0030">Aminoacyl-tRNA synthetase</keyword>
<keyword id="KW-0067">ATP-binding</keyword>
<keyword id="KW-0963">Cytoplasm</keyword>
<keyword id="KW-0436">Ligase</keyword>
<keyword id="KW-0479">Metal-binding</keyword>
<keyword id="KW-0547">Nucleotide-binding</keyword>
<keyword id="KW-0648">Protein biosynthesis</keyword>
<keyword id="KW-1185">Reference proteome</keyword>
<keyword id="KW-0694">RNA-binding</keyword>
<keyword id="KW-0820">tRNA-binding</keyword>
<keyword id="KW-0862">Zinc</keyword>
<evidence type="ECO:0000255" key="1">
    <source>
        <dbReference type="HAMAP-Rule" id="MF_00098"/>
    </source>
</evidence>
<evidence type="ECO:0000256" key="2">
    <source>
        <dbReference type="SAM" id="MobiDB-lite"/>
    </source>
</evidence>
<comment type="function">
    <text evidence="1">Is required not only for elongation of protein synthesis but also for the initiation of all mRNA translation through initiator tRNA(fMet) aminoacylation.</text>
</comment>
<comment type="catalytic activity">
    <reaction evidence="1">
        <text>tRNA(Met) + L-methionine + ATP = L-methionyl-tRNA(Met) + AMP + diphosphate</text>
        <dbReference type="Rhea" id="RHEA:13481"/>
        <dbReference type="Rhea" id="RHEA-COMP:9667"/>
        <dbReference type="Rhea" id="RHEA-COMP:9698"/>
        <dbReference type="ChEBI" id="CHEBI:30616"/>
        <dbReference type="ChEBI" id="CHEBI:33019"/>
        <dbReference type="ChEBI" id="CHEBI:57844"/>
        <dbReference type="ChEBI" id="CHEBI:78442"/>
        <dbReference type="ChEBI" id="CHEBI:78530"/>
        <dbReference type="ChEBI" id="CHEBI:456215"/>
        <dbReference type="EC" id="6.1.1.10"/>
    </reaction>
</comment>
<comment type="cofactor">
    <cofactor evidence="1">
        <name>Zn(2+)</name>
        <dbReference type="ChEBI" id="CHEBI:29105"/>
    </cofactor>
    <text evidence="1">Binds 1 zinc ion per subunit.</text>
</comment>
<comment type="subunit">
    <text evidence="1">Homodimer.</text>
</comment>
<comment type="subcellular location">
    <subcellularLocation>
        <location evidence="1">Cytoplasm</location>
    </subcellularLocation>
</comment>
<comment type="similarity">
    <text evidence="1">Belongs to the class-I aminoacyl-tRNA synthetase family. MetG type 1 subfamily.</text>
</comment>
<sequence length="694" mass="78665">MTSPRKILVTSALPYANGPIHLGHLVEYIQTDIWVRFQKMRGHDCRYVCADDTHGTPIMLRAEKEGISPEELIARVHGEHLRDFTGFHIEFDNYYSTHSEETRAHAADIYGRLKDRGLIESRAIEQYFDPVKEMFLPDRFIKGECPKCHAKDQYGDSCEVCGTTYSPTDLINPYSVVSGAAPVRRESVHYFFKLGECAEFLKDWTRSGALQTEAANKLNEWFEAGLSDWDISRDAPYFGFEIPDAPGKYFYVWLDAPIGYMGSFQNLCDRLGLDFAEYWKKDSEAELYHFIGKDILYFHALFWPAMLEHSGFRTPTRIFAHGFLTVNGEKMSKSRGTFITAQSYLEQGLNPEWLRYYYACKLNGTMEDIDLSLEDFVARVNSDLVGKYINIASRTAGFVTKFFDGRLDVPMQLADGEALDFLIDRLRDSAEEISGYYDSRDYNKAIRKIMELADEVNIFVNEKKPWEIAKRDDSYSRGYLRVVCAITLNLFRLLTIYLKPILPRLAEAVEGFLKIPSLTWQDAQTLLPQGHTINDYQHLMTRIDPKQVDALVEANRQSLQATAGQPEPHSQVRHAEHQQRQVQPIAETISIDDFAKVDLRIARIANAEHVEGADKLLKLTLDLGGETRTVFAGIKSAYAPETLIGRLTVMVANLAPRKMKFGLSEGMVLAAGPGGGDIFLLSPDEGAQPGMKVK</sequence>
<organism>
    <name type="scientific">Methylococcus capsulatus (strain ATCC 33009 / NCIMB 11132 / Bath)</name>
    <dbReference type="NCBI Taxonomy" id="243233"/>
    <lineage>
        <taxon>Bacteria</taxon>
        <taxon>Pseudomonadati</taxon>
        <taxon>Pseudomonadota</taxon>
        <taxon>Gammaproteobacteria</taxon>
        <taxon>Methylococcales</taxon>
        <taxon>Methylococcaceae</taxon>
        <taxon>Methylococcus</taxon>
    </lineage>
</organism>
<proteinExistence type="inferred from homology"/>
<gene>
    <name evidence="1" type="primary">metG</name>
    <name type="ordered locus">MCA0016</name>
</gene>
<feature type="chain" id="PRO_0000139143" description="Methionine--tRNA ligase">
    <location>
        <begin position="1"/>
        <end position="694"/>
    </location>
</feature>
<feature type="domain" description="tRNA-binding" evidence="1">
    <location>
        <begin position="593"/>
        <end position="694"/>
    </location>
</feature>
<feature type="region of interest" description="Disordered" evidence="2">
    <location>
        <begin position="558"/>
        <end position="579"/>
    </location>
</feature>
<feature type="short sequence motif" description="'HIGH' region">
    <location>
        <begin position="14"/>
        <end position="24"/>
    </location>
</feature>
<feature type="short sequence motif" description="'KMSKS' region">
    <location>
        <begin position="330"/>
        <end position="334"/>
    </location>
</feature>
<feature type="binding site" evidence="1">
    <location>
        <position position="145"/>
    </location>
    <ligand>
        <name>Zn(2+)</name>
        <dbReference type="ChEBI" id="CHEBI:29105"/>
    </ligand>
</feature>
<feature type="binding site" evidence="1">
    <location>
        <position position="148"/>
    </location>
    <ligand>
        <name>Zn(2+)</name>
        <dbReference type="ChEBI" id="CHEBI:29105"/>
    </ligand>
</feature>
<feature type="binding site" evidence="1">
    <location>
        <position position="158"/>
    </location>
    <ligand>
        <name>Zn(2+)</name>
        <dbReference type="ChEBI" id="CHEBI:29105"/>
    </ligand>
</feature>
<feature type="binding site" evidence="1">
    <location>
        <position position="161"/>
    </location>
    <ligand>
        <name>Zn(2+)</name>
        <dbReference type="ChEBI" id="CHEBI:29105"/>
    </ligand>
</feature>
<feature type="binding site" evidence="1">
    <location>
        <position position="333"/>
    </location>
    <ligand>
        <name>ATP</name>
        <dbReference type="ChEBI" id="CHEBI:30616"/>
    </ligand>
</feature>
<accession>Q60CR0</accession>
<name>SYM_METCA</name>
<protein>
    <recommendedName>
        <fullName evidence="1">Methionine--tRNA ligase</fullName>
        <ecNumber evidence="1">6.1.1.10</ecNumber>
    </recommendedName>
    <alternativeName>
        <fullName evidence="1">Methionyl-tRNA synthetase</fullName>
        <shortName evidence="1">MetRS</shortName>
    </alternativeName>
</protein>
<reference key="1">
    <citation type="journal article" date="2004" name="PLoS Biol.">
        <title>Genomic insights into methanotrophy: the complete genome sequence of Methylococcus capsulatus (Bath).</title>
        <authorList>
            <person name="Ward N.L."/>
            <person name="Larsen O."/>
            <person name="Sakwa J."/>
            <person name="Bruseth L."/>
            <person name="Khouri H.M."/>
            <person name="Durkin A.S."/>
            <person name="Dimitrov G."/>
            <person name="Jiang L."/>
            <person name="Scanlan D."/>
            <person name="Kang K.H."/>
            <person name="Lewis M.R."/>
            <person name="Nelson K.E."/>
            <person name="Methe B.A."/>
            <person name="Wu M."/>
            <person name="Heidelberg J.F."/>
            <person name="Paulsen I.T."/>
            <person name="Fouts D.E."/>
            <person name="Ravel J."/>
            <person name="Tettelin H."/>
            <person name="Ren Q."/>
            <person name="Read T.D."/>
            <person name="DeBoy R.T."/>
            <person name="Seshadri R."/>
            <person name="Salzberg S.L."/>
            <person name="Jensen H.B."/>
            <person name="Birkeland N.K."/>
            <person name="Nelson W.C."/>
            <person name="Dodson R.J."/>
            <person name="Grindhaug S.H."/>
            <person name="Holt I.E."/>
            <person name="Eidhammer I."/>
            <person name="Jonasen I."/>
            <person name="Vanaken S."/>
            <person name="Utterback T.R."/>
            <person name="Feldblyum T.V."/>
            <person name="Fraser C.M."/>
            <person name="Lillehaug J.R."/>
            <person name="Eisen J.A."/>
        </authorList>
    </citation>
    <scope>NUCLEOTIDE SEQUENCE [LARGE SCALE GENOMIC DNA]</scope>
    <source>
        <strain>ATCC 33009 / NCIMB 11132 / Bath</strain>
    </source>
</reference>
<dbReference type="EC" id="6.1.1.10" evidence="1"/>
<dbReference type="EMBL" id="AE017282">
    <property type="protein sequence ID" value="AAU90731.1"/>
    <property type="molecule type" value="Genomic_DNA"/>
</dbReference>
<dbReference type="RefSeq" id="WP_010959389.1">
    <property type="nucleotide sequence ID" value="NC_002977.6"/>
</dbReference>
<dbReference type="SMR" id="Q60CR0"/>
<dbReference type="STRING" id="243233.MCA0016"/>
<dbReference type="GeneID" id="88222369"/>
<dbReference type="KEGG" id="mca:MCA0016"/>
<dbReference type="eggNOG" id="COG0073">
    <property type="taxonomic scope" value="Bacteria"/>
</dbReference>
<dbReference type="eggNOG" id="COG0143">
    <property type="taxonomic scope" value="Bacteria"/>
</dbReference>
<dbReference type="HOGENOM" id="CLU_009710_7_0_6"/>
<dbReference type="Proteomes" id="UP000006821">
    <property type="component" value="Chromosome"/>
</dbReference>
<dbReference type="GO" id="GO:0005829">
    <property type="term" value="C:cytosol"/>
    <property type="evidence" value="ECO:0007669"/>
    <property type="project" value="TreeGrafter"/>
</dbReference>
<dbReference type="GO" id="GO:0005524">
    <property type="term" value="F:ATP binding"/>
    <property type="evidence" value="ECO:0007669"/>
    <property type="project" value="UniProtKB-UniRule"/>
</dbReference>
<dbReference type="GO" id="GO:0046872">
    <property type="term" value="F:metal ion binding"/>
    <property type="evidence" value="ECO:0007669"/>
    <property type="project" value="UniProtKB-KW"/>
</dbReference>
<dbReference type="GO" id="GO:0004825">
    <property type="term" value="F:methionine-tRNA ligase activity"/>
    <property type="evidence" value="ECO:0007669"/>
    <property type="project" value="UniProtKB-UniRule"/>
</dbReference>
<dbReference type="GO" id="GO:0000049">
    <property type="term" value="F:tRNA binding"/>
    <property type="evidence" value="ECO:0007669"/>
    <property type="project" value="UniProtKB-KW"/>
</dbReference>
<dbReference type="GO" id="GO:0006431">
    <property type="term" value="P:methionyl-tRNA aminoacylation"/>
    <property type="evidence" value="ECO:0007669"/>
    <property type="project" value="UniProtKB-UniRule"/>
</dbReference>
<dbReference type="CDD" id="cd07957">
    <property type="entry name" value="Anticodon_Ia_Met"/>
    <property type="match status" value="1"/>
</dbReference>
<dbReference type="CDD" id="cd00814">
    <property type="entry name" value="MetRS_core"/>
    <property type="match status" value="1"/>
</dbReference>
<dbReference type="CDD" id="cd02800">
    <property type="entry name" value="tRNA_bind_EcMetRS_like"/>
    <property type="match status" value="1"/>
</dbReference>
<dbReference type="FunFam" id="2.20.28.20:FF:000001">
    <property type="entry name" value="Methionine--tRNA ligase"/>
    <property type="match status" value="1"/>
</dbReference>
<dbReference type="FunFam" id="2.40.50.140:FF:000042">
    <property type="entry name" value="Methionine--tRNA ligase"/>
    <property type="match status" value="1"/>
</dbReference>
<dbReference type="Gene3D" id="3.40.50.620">
    <property type="entry name" value="HUPs"/>
    <property type="match status" value="1"/>
</dbReference>
<dbReference type="Gene3D" id="1.10.730.10">
    <property type="entry name" value="Isoleucyl-tRNA Synthetase, Domain 1"/>
    <property type="match status" value="1"/>
</dbReference>
<dbReference type="Gene3D" id="2.20.28.20">
    <property type="entry name" value="Methionyl-tRNA synthetase, Zn-domain"/>
    <property type="match status" value="1"/>
</dbReference>
<dbReference type="Gene3D" id="2.40.50.140">
    <property type="entry name" value="Nucleic acid-binding proteins"/>
    <property type="match status" value="1"/>
</dbReference>
<dbReference type="HAMAP" id="MF_00098">
    <property type="entry name" value="Met_tRNA_synth_type1"/>
    <property type="match status" value="1"/>
</dbReference>
<dbReference type="InterPro" id="IPR001412">
    <property type="entry name" value="aa-tRNA-synth_I_CS"/>
</dbReference>
<dbReference type="InterPro" id="IPR041872">
    <property type="entry name" value="Anticodon_Met"/>
</dbReference>
<dbReference type="InterPro" id="IPR004495">
    <property type="entry name" value="Met-tRNA-synth_bsu_C"/>
</dbReference>
<dbReference type="InterPro" id="IPR023458">
    <property type="entry name" value="Met-tRNA_ligase_1"/>
</dbReference>
<dbReference type="InterPro" id="IPR014758">
    <property type="entry name" value="Met-tRNA_synth"/>
</dbReference>
<dbReference type="InterPro" id="IPR015413">
    <property type="entry name" value="Methionyl/Leucyl_tRNA_Synth"/>
</dbReference>
<dbReference type="InterPro" id="IPR033911">
    <property type="entry name" value="MetRS_core"/>
</dbReference>
<dbReference type="InterPro" id="IPR029038">
    <property type="entry name" value="MetRS_Zn"/>
</dbReference>
<dbReference type="InterPro" id="IPR012340">
    <property type="entry name" value="NA-bd_OB-fold"/>
</dbReference>
<dbReference type="InterPro" id="IPR014729">
    <property type="entry name" value="Rossmann-like_a/b/a_fold"/>
</dbReference>
<dbReference type="InterPro" id="IPR002547">
    <property type="entry name" value="tRNA-bd_dom"/>
</dbReference>
<dbReference type="InterPro" id="IPR009080">
    <property type="entry name" value="tRNAsynth_Ia_anticodon-bd"/>
</dbReference>
<dbReference type="NCBIfam" id="TIGR00398">
    <property type="entry name" value="metG"/>
    <property type="match status" value="1"/>
</dbReference>
<dbReference type="NCBIfam" id="TIGR00399">
    <property type="entry name" value="metG_C_term"/>
    <property type="match status" value="1"/>
</dbReference>
<dbReference type="NCBIfam" id="NF001100">
    <property type="entry name" value="PRK00133.1"/>
    <property type="match status" value="1"/>
</dbReference>
<dbReference type="PANTHER" id="PTHR45765">
    <property type="entry name" value="METHIONINE--TRNA LIGASE"/>
    <property type="match status" value="1"/>
</dbReference>
<dbReference type="PANTHER" id="PTHR45765:SF1">
    <property type="entry name" value="METHIONINE--TRNA LIGASE, CYTOPLASMIC"/>
    <property type="match status" value="1"/>
</dbReference>
<dbReference type="Pfam" id="PF19303">
    <property type="entry name" value="Anticodon_3"/>
    <property type="match status" value="1"/>
</dbReference>
<dbReference type="Pfam" id="PF09334">
    <property type="entry name" value="tRNA-synt_1g"/>
    <property type="match status" value="1"/>
</dbReference>
<dbReference type="Pfam" id="PF01588">
    <property type="entry name" value="tRNA_bind"/>
    <property type="match status" value="1"/>
</dbReference>
<dbReference type="PRINTS" id="PR01041">
    <property type="entry name" value="TRNASYNTHMET"/>
</dbReference>
<dbReference type="SUPFAM" id="SSF47323">
    <property type="entry name" value="Anticodon-binding domain of a subclass of class I aminoacyl-tRNA synthetases"/>
    <property type="match status" value="1"/>
</dbReference>
<dbReference type="SUPFAM" id="SSF57770">
    <property type="entry name" value="Methionyl-tRNA synthetase (MetRS), Zn-domain"/>
    <property type="match status" value="1"/>
</dbReference>
<dbReference type="SUPFAM" id="SSF50249">
    <property type="entry name" value="Nucleic acid-binding proteins"/>
    <property type="match status" value="1"/>
</dbReference>
<dbReference type="SUPFAM" id="SSF52374">
    <property type="entry name" value="Nucleotidylyl transferase"/>
    <property type="match status" value="1"/>
</dbReference>
<dbReference type="PROSITE" id="PS00178">
    <property type="entry name" value="AA_TRNA_LIGASE_I"/>
    <property type="match status" value="1"/>
</dbReference>
<dbReference type="PROSITE" id="PS50886">
    <property type="entry name" value="TRBD"/>
    <property type="match status" value="1"/>
</dbReference>